<gene>
    <name evidence="1" type="primary">mraZ</name>
    <name type="ordered locus">SPAB_00152</name>
</gene>
<proteinExistence type="inferred from homology"/>
<dbReference type="EMBL" id="CP000886">
    <property type="protein sequence ID" value="ABX65594.1"/>
    <property type="molecule type" value="Genomic_DNA"/>
</dbReference>
<dbReference type="RefSeq" id="WP_000488294.1">
    <property type="nucleotide sequence ID" value="NC_010102.1"/>
</dbReference>
<dbReference type="SMR" id="A9MZL0"/>
<dbReference type="KEGG" id="spq:SPAB_00152"/>
<dbReference type="PATRIC" id="fig|1016998.12.peg.145"/>
<dbReference type="HOGENOM" id="CLU_107907_2_0_6"/>
<dbReference type="BioCyc" id="SENT1016998:SPAB_RS00595-MONOMER"/>
<dbReference type="Proteomes" id="UP000008556">
    <property type="component" value="Chromosome"/>
</dbReference>
<dbReference type="GO" id="GO:0005737">
    <property type="term" value="C:cytoplasm"/>
    <property type="evidence" value="ECO:0007669"/>
    <property type="project" value="UniProtKB-UniRule"/>
</dbReference>
<dbReference type="GO" id="GO:0009295">
    <property type="term" value="C:nucleoid"/>
    <property type="evidence" value="ECO:0007669"/>
    <property type="project" value="UniProtKB-SubCell"/>
</dbReference>
<dbReference type="GO" id="GO:0003700">
    <property type="term" value="F:DNA-binding transcription factor activity"/>
    <property type="evidence" value="ECO:0007669"/>
    <property type="project" value="UniProtKB-UniRule"/>
</dbReference>
<dbReference type="GO" id="GO:0000976">
    <property type="term" value="F:transcription cis-regulatory region binding"/>
    <property type="evidence" value="ECO:0007669"/>
    <property type="project" value="TreeGrafter"/>
</dbReference>
<dbReference type="GO" id="GO:2000143">
    <property type="term" value="P:negative regulation of DNA-templated transcription initiation"/>
    <property type="evidence" value="ECO:0007669"/>
    <property type="project" value="TreeGrafter"/>
</dbReference>
<dbReference type="CDD" id="cd16321">
    <property type="entry name" value="MraZ_C"/>
    <property type="match status" value="1"/>
</dbReference>
<dbReference type="CDD" id="cd16320">
    <property type="entry name" value="MraZ_N"/>
    <property type="match status" value="1"/>
</dbReference>
<dbReference type="FunFam" id="3.40.1550.20:FF:000001">
    <property type="entry name" value="Transcriptional regulator MraZ"/>
    <property type="match status" value="1"/>
</dbReference>
<dbReference type="Gene3D" id="3.40.1550.20">
    <property type="entry name" value="Transcriptional regulator MraZ domain"/>
    <property type="match status" value="1"/>
</dbReference>
<dbReference type="HAMAP" id="MF_01008">
    <property type="entry name" value="MraZ"/>
    <property type="match status" value="1"/>
</dbReference>
<dbReference type="InterPro" id="IPR003444">
    <property type="entry name" value="MraZ"/>
</dbReference>
<dbReference type="InterPro" id="IPR035644">
    <property type="entry name" value="MraZ_C"/>
</dbReference>
<dbReference type="InterPro" id="IPR020603">
    <property type="entry name" value="MraZ_dom"/>
</dbReference>
<dbReference type="InterPro" id="IPR035642">
    <property type="entry name" value="MraZ_N"/>
</dbReference>
<dbReference type="InterPro" id="IPR038619">
    <property type="entry name" value="MraZ_sf"/>
</dbReference>
<dbReference type="InterPro" id="IPR007159">
    <property type="entry name" value="SpoVT-AbrB_dom"/>
</dbReference>
<dbReference type="InterPro" id="IPR037914">
    <property type="entry name" value="SpoVT-AbrB_sf"/>
</dbReference>
<dbReference type="NCBIfam" id="TIGR00242">
    <property type="entry name" value="division/cell wall cluster transcriptional repressor MraZ"/>
    <property type="match status" value="1"/>
</dbReference>
<dbReference type="PANTHER" id="PTHR34701">
    <property type="entry name" value="TRANSCRIPTIONAL REGULATOR MRAZ"/>
    <property type="match status" value="1"/>
</dbReference>
<dbReference type="PANTHER" id="PTHR34701:SF1">
    <property type="entry name" value="TRANSCRIPTIONAL REGULATOR MRAZ"/>
    <property type="match status" value="1"/>
</dbReference>
<dbReference type="Pfam" id="PF02381">
    <property type="entry name" value="MraZ"/>
    <property type="match status" value="2"/>
</dbReference>
<dbReference type="SUPFAM" id="SSF89447">
    <property type="entry name" value="AbrB/MazE/MraZ-like"/>
    <property type="match status" value="1"/>
</dbReference>
<dbReference type="PROSITE" id="PS51740">
    <property type="entry name" value="SPOVT_ABRB"/>
    <property type="match status" value="2"/>
</dbReference>
<accession>A9MZL0</accession>
<comment type="function">
    <text evidence="1">Negatively regulates its own expression and that of the subsequent genes in the proximal part of the division and cell wall (dcw) gene cluster. Acts by binding directly to DNA. May also regulate the expression of genes outside the dcw cluster.</text>
</comment>
<comment type="subunit">
    <text evidence="1">Forms oligomers.</text>
</comment>
<comment type="subcellular location">
    <subcellularLocation>
        <location evidence="1">Cytoplasm</location>
        <location evidence="1">Nucleoid</location>
    </subcellularLocation>
</comment>
<comment type="similarity">
    <text evidence="1">Belongs to the MraZ family.</text>
</comment>
<name>MRAZ_SALPB</name>
<organism>
    <name type="scientific">Salmonella paratyphi B (strain ATCC BAA-1250 / SPB7)</name>
    <dbReference type="NCBI Taxonomy" id="1016998"/>
    <lineage>
        <taxon>Bacteria</taxon>
        <taxon>Pseudomonadati</taxon>
        <taxon>Pseudomonadota</taxon>
        <taxon>Gammaproteobacteria</taxon>
        <taxon>Enterobacterales</taxon>
        <taxon>Enterobacteriaceae</taxon>
        <taxon>Salmonella</taxon>
    </lineage>
</organism>
<keyword id="KW-0963">Cytoplasm</keyword>
<keyword id="KW-0238">DNA-binding</keyword>
<keyword id="KW-0677">Repeat</keyword>
<keyword id="KW-0678">Repressor</keyword>
<keyword id="KW-0804">Transcription</keyword>
<keyword id="KW-0805">Transcription regulation</keyword>
<sequence length="152" mass="17435">MFRGATLVNLDSKGRLTVPTRYREQLIESATGQMVCTIDIHHPCLLLYPLPEWEIIEQKLSRLSSMNPVERRVQRLLLGHASECQMDGAGRLLIAPVLRQHAGLTKEVMLVGQFNKFELWDETTWYQQVKEDIDAEQSATETLSERLQDLSL</sequence>
<evidence type="ECO:0000255" key="1">
    <source>
        <dbReference type="HAMAP-Rule" id="MF_01008"/>
    </source>
</evidence>
<evidence type="ECO:0000255" key="2">
    <source>
        <dbReference type="PROSITE-ProRule" id="PRU01076"/>
    </source>
</evidence>
<reference key="1">
    <citation type="submission" date="2007-11" db="EMBL/GenBank/DDBJ databases">
        <authorList>
            <consortium name="The Salmonella enterica serovar Paratyphi B Genome Sequencing Project"/>
            <person name="McClelland M."/>
            <person name="Sanderson E.K."/>
            <person name="Porwollik S."/>
            <person name="Spieth J."/>
            <person name="Clifton W.S."/>
            <person name="Fulton R."/>
            <person name="Cordes M."/>
            <person name="Wollam A."/>
            <person name="Shah N."/>
            <person name="Pepin K."/>
            <person name="Bhonagiri V."/>
            <person name="Nash W."/>
            <person name="Johnson M."/>
            <person name="Thiruvilangam P."/>
            <person name="Wilson R."/>
        </authorList>
    </citation>
    <scope>NUCLEOTIDE SEQUENCE [LARGE SCALE GENOMIC DNA]</scope>
    <source>
        <strain>ATCC BAA-1250 / SPB7</strain>
    </source>
</reference>
<protein>
    <recommendedName>
        <fullName>Transcriptional regulator MraZ</fullName>
    </recommendedName>
</protein>
<feature type="chain" id="PRO_1000084018" description="Transcriptional regulator MraZ">
    <location>
        <begin position="1"/>
        <end position="152"/>
    </location>
</feature>
<feature type="domain" description="SpoVT-AbrB 1" evidence="2">
    <location>
        <begin position="5"/>
        <end position="52"/>
    </location>
</feature>
<feature type="domain" description="SpoVT-AbrB 2" evidence="2">
    <location>
        <begin position="81"/>
        <end position="124"/>
    </location>
</feature>